<name>MEND_STAEQ</name>
<organism>
    <name type="scientific">Staphylococcus epidermidis (strain ATCC 35984 / DSM 28319 / BCRC 17069 / CCUG 31568 / BM 3577 / RP62A)</name>
    <dbReference type="NCBI Taxonomy" id="176279"/>
    <lineage>
        <taxon>Bacteria</taxon>
        <taxon>Bacillati</taxon>
        <taxon>Bacillota</taxon>
        <taxon>Bacilli</taxon>
        <taxon>Bacillales</taxon>
        <taxon>Staphylococcaceae</taxon>
        <taxon>Staphylococcus</taxon>
    </lineage>
</organism>
<gene>
    <name evidence="1" type="primary">menD</name>
    <name type="ordered locus">SERP0630</name>
</gene>
<feature type="chain" id="PRO_0000341864" description="2-succinyl-5-enolpyruvyl-6-hydroxy-3-cyclohexene-1-carboxylate synthase">
    <location>
        <begin position="1"/>
        <end position="556"/>
    </location>
</feature>
<accession>Q5HQC5</accession>
<proteinExistence type="inferred from homology"/>
<evidence type="ECO:0000255" key="1">
    <source>
        <dbReference type="HAMAP-Rule" id="MF_01659"/>
    </source>
</evidence>
<evidence type="ECO:0000305" key="2"/>
<protein>
    <recommendedName>
        <fullName evidence="1">2-succinyl-5-enolpyruvyl-6-hydroxy-3-cyclohexene-1-carboxylate synthase</fullName>
        <shortName evidence="1">SEPHCHC synthase</shortName>
        <ecNumber evidence="1">2.2.1.9</ecNumber>
    </recommendedName>
    <alternativeName>
        <fullName evidence="1">Menaquinone biosynthesis protein MenD</fullName>
    </alternativeName>
</protein>
<keyword id="KW-0460">Magnesium</keyword>
<keyword id="KW-0464">Manganese</keyword>
<keyword id="KW-0474">Menaquinone biosynthesis</keyword>
<keyword id="KW-0479">Metal-binding</keyword>
<keyword id="KW-1185">Reference proteome</keyword>
<keyword id="KW-0786">Thiamine pyrophosphate</keyword>
<keyword id="KW-0808">Transferase</keyword>
<comment type="function">
    <text evidence="1">Catalyzes the thiamine diphosphate-dependent decarboxylation of 2-oxoglutarate and the subsequent addition of the resulting succinic semialdehyde-thiamine pyrophosphate anion to isochorismate to yield 2-succinyl-5-enolpyruvyl-6-hydroxy-3-cyclohexene-1-carboxylate (SEPHCHC).</text>
</comment>
<comment type="catalytic activity">
    <reaction evidence="1">
        <text>isochorismate + 2-oxoglutarate + H(+) = 5-enolpyruvoyl-6-hydroxy-2-succinyl-cyclohex-3-ene-1-carboxylate + CO2</text>
        <dbReference type="Rhea" id="RHEA:25593"/>
        <dbReference type="ChEBI" id="CHEBI:15378"/>
        <dbReference type="ChEBI" id="CHEBI:16526"/>
        <dbReference type="ChEBI" id="CHEBI:16810"/>
        <dbReference type="ChEBI" id="CHEBI:29780"/>
        <dbReference type="ChEBI" id="CHEBI:58818"/>
        <dbReference type="EC" id="2.2.1.9"/>
    </reaction>
</comment>
<comment type="cofactor">
    <cofactor evidence="1">
        <name>Mg(2+)</name>
        <dbReference type="ChEBI" id="CHEBI:18420"/>
    </cofactor>
    <cofactor evidence="1">
        <name>Mn(2+)</name>
        <dbReference type="ChEBI" id="CHEBI:29035"/>
    </cofactor>
</comment>
<comment type="cofactor">
    <cofactor evidence="1">
        <name>thiamine diphosphate</name>
        <dbReference type="ChEBI" id="CHEBI:58937"/>
    </cofactor>
    <text evidence="1">Binds 1 thiamine pyrophosphate per subunit.</text>
</comment>
<comment type="pathway">
    <text evidence="1">Quinol/quinone metabolism; 1,4-dihydroxy-2-naphthoate biosynthesis; 1,4-dihydroxy-2-naphthoate from chorismate: step 2/7.</text>
</comment>
<comment type="pathway">
    <text evidence="1">Quinol/quinone metabolism; menaquinone biosynthesis.</text>
</comment>
<comment type="subunit">
    <text evidence="1">Homodimer.</text>
</comment>
<comment type="similarity">
    <text evidence="1">Belongs to the TPP enzyme family. MenD subfamily.</text>
</comment>
<comment type="sequence caution" evidence="2">
    <conflict type="erroneous initiation">
        <sequence resource="EMBL-CDS" id="AAW53955"/>
    </conflict>
</comment>
<dbReference type="EC" id="2.2.1.9" evidence="1"/>
<dbReference type="EMBL" id="CP000029">
    <property type="protein sequence ID" value="AAW53955.1"/>
    <property type="status" value="ALT_INIT"/>
    <property type="molecule type" value="Genomic_DNA"/>
</dbReference>
<dbReference type="SMR" id="Q5HQC5"/>
<dbReference type="STRING" id="176279.SERP0630"/>
<dbReference type="KEGG" id="ser:SERP0630"/>
<dbReference type="eggNOG" id="COG1165">
    <property type="taxonomic scope" value="Bacteria"/>
</dbReference>
<dbReference type="HOGENOM" id="CLU_006051_3_0_9"/>
<dbReference type="UniPathway" id="UPA00079"/>
<dbReference type="UniPathway" id="UPA01057">
    <property type="reaction ID" value="UER00164"/>
</dbReference>
<dbReference type="Proteomes" id="UP000000531">
    <property type="component" value="Chromosome"/>
</dbReference>
<dbReference type="GO" id="GO:0070204">
    <property type="term" value="F:2-succinyl-5-enolpyruvyl-6-hydroxy-3-cyclohexene-1-carboxylic-acid synthase activity"/>
    <property type="evidence" value="ECO:0007669"/>
    <property type="project" value="UniProtKB-UniRule"/>
</dbReference>
<dbReference type="GO" id="GO:0000287">
    <property type="term" value="F:magnesium ion binding"/>
    <property type="evidence" value="ECO:0007669"/>
    <property type="project" value="UniProtKB-UniRule"/>
</dbReference>
<dbReference type="GO" id="GO:0030145">
    <property type="term" value="F:manganese ion binding"/>
    <property type="evidence" value="ECO:0007669"/>
    <property type="project" value="UniProtKB-UniRule"/>
</dbReference>
<dbReference type="GO" id="GO:0030976">
    <property type="term" value="F:thiamine pyrophosphate binding"/>
    <property type="evidence" value="ECO:0007669"/>
    <property type="project" value="UniProtKB-UniRule"/>
</dbReference>
<dbReference type="GO" id="GO:0009234">
    <property type="term" value="P:menaquinone biosynthetic process"/>
    <property type="evidence" value="ECO:0007669"/>
    <property type="project" value="UniProtKB-UniRule"/>
</dbReference>
<dbReference type="CDD" id="cd07037">
    <property type="entry name" value="TPP_PYR_MenD"/>
    <property type="match status" value="1"/>
</dbReference>
<dbReference type="CDD" id="cd02009">
    <property type="entry name" value="TPP_SHCHC_synthase"/>
    <property type="match status" value="1"/>
</dbReference>
<dbReference type="Gene3D" id="3.40.50.970">
    <property type="match status" value="2"/>
</dbReference>
<dbReference type="Gene3D" id="3.40.50.1220">
    <property type="entry name" value="TPP-binding domain"/>
    <property type="match status" value="1"/>
</dbReference>
<dbReference type="HAMAP" id="MF_01659">
    <property type="entry name" value="MenD"/>
    <property type="match status" value="1"/>
</dbReference>
<dbReference type="InterPro" id="IPR004433">
    <property type="entry name" value="MenaQ_synth_MenD"/>
</dbReference>
<dbReference type="InterPro" id="IPR032264">
    <property type="entry name" value="MenD_middle"/>
</dbReference>
<dbReference type="InterPro" id="IPR029061">
    <property type="entry name" value="THDP-binding"/>
</dbReference>
<dbReference type="InterPro" id="IPR012001">
    <property type="entry name" value="Thiamin_PyroP_enz_TPP-bd_dom"/>
</dbReference>
<dbReference type="InterPro" id="IPR011766">
    <property type="entry name" value="TPP_enzyme_TPP-bd"/>
</dbReference>
<dbReference type="NCBIfam" id="TIGR00173">
    <property type="entry name" value="menD"/>
    <property type="match status" value="1"/>
</dbReference>
<dbReference type="PANTHER" id="PTHR42916">
    <property type="entry name" value="2-SUCCINYL-5-ENOLPYRUVYL-6-HYDROXY-3-CYCLOHEXENE-1-CARBOXYLATE SYNTHASE"/>
    <property type="match status" value="1"/>
</dbReference>
<dbReference type="PANTHER" id="PTHR42916:SF1">
    <property type="entry name" value="PROTEIN PHYLLO, CHLOROPLASTIC"/>
    <property type="match status" value="1"/>
</dbReference>
<dbReference type="Pfam" id="PF02775">
    <property type="entry name" value="TPP_enzyme_C"/>
    <property type="match status" value="1"/>
</dbReference>
<dbReference type="Pfam" id="PF16582">
    <property type="entry name" value="TPP_enzyme_M_2"/>
    <property type="match status" value="1"/>
</dbReference>
<dbReference type="Pfam" id="PF02776">
    <property type="entry name" value="TPP_enzyme_N"/>
    <property type="match status" value="1"/>
</dbReference>
<dbReference type="PIRSF" id="PIRSF004983">
    <property type="entry name" value="MenD"/>
    <property type="match status" value="1"/>
</dbReference>
<dbReference type="SUPFAM" id="SSF52518">
    <property type="entry name" value="Thiamin diphosphate-binding fold (THDP-binding)"/>
    <property type="match status" value="2"/>
</dbReference>
<sequence>MNHSEALTEQVFSFASELYAYGVREVVISPGSRSTPLALVFEAHPNIKTWIHPDERSAAFFALGLIKGSEKPVAILCTSGTAAANYTPAIAESQISRLPLVVLTSDRPHELRSVGAPQAINQVNMFSNYVNFQFDLPIADGSEHTIDTINYQMQIASQYLYGPHRGPIHFNLPFREPLTPDLDRVDLLTSVTKTLPHYQKSISVDDIKDILQEKNGLIIVGDMQHQAVDQILTYSTIYDLPILADPLSQLRKEKHPNVITTYDLLYRAGLNLEVDYVIRVGKPVISKKLNQWLKKTDAYQIIVQNNDQIDVFPTPPHISYEISANDFFRSLMEEPLVERKKWLQQWQSLEQQARIEISDYLKHATDEAAYVGSLIQKLTKEDTLFVGNSMPIRDVDNLLFDSEASVYANRGANGIDGVVSTALGMAAHKNVTLLIGDLSFYHDMNGLLMAKLNELHINIVLVNNNGGGIFSYLPQKRSATKYFERLFGTPTGLNFEYTALLYDFTFKRFDNLTDFKYAELSKMGSHMYEVITNRDENLHQHQNLYQKLSEIVNVTL</sequence>
<reference key="1">
    <citation type="journal article" date="2005" name="J. Bacteriol.">
        <title>Insights on evolution of virulence and resistance from the complete genome analysis of an early methicillin-resistant Staphylococcus aureus strain and a biofilm-producing methicillin-resistant Staphylococcus epidermidis strain.</title>
        <authorList>
            <person name="Gill S.R."/>
            <person name="Fouts D.E."/>
            <person name="Archer G.L."/>
            <person name="Mongodin E.F."/>
            <person name="DeBoy R.T."/>
            <person name="Ravel J."/>
            <person name="Paulsen I.T."/>
            <person name="Kolonay J.F."/>
            <person name="Brinkac L.M."/>
            <person name="Beanan M.J."/>
            <person name="Dodson R.J."/>
            <person name="Daugherty S.C."/>
            <person name="Madupu R."/>
            <person name="Angiuoli S.V."/>
            <person name="Durkin A.S."/>
            <person name="Haft D.H."/>
            <person name="Vamathevan J.J."/>
            <person name="Khouri H."/>
            <person name="Utterback T.R."/>
            <person name="Lee C."/>
            <person name="Dimitrov G."/>
            <person name="Jiang L."/>
            <person name="Qin H."/>
            <person name="Weidman J."/>
            <person name="Tran K."/>
            <person name="Kang K.H."/>
            <person name="Hance I.R."/>
            <person name="Nelson K.E."/>
            <person name="Fraser C.M."/>
        </authorList>
    </citation>
    <scope>NUCLEOTIDE SEQUENCE [LARGE SCALE GENOMIC DNA]</scope>
    <source>
        <strain>ATCC 35984 / DSM 28319 / BCRC 17069 / CCUG 31568 / BM 3577 / RP62A</strain>
    </source>
</reference>